<accession>Q1BEZ2</accession>
<evidence type="ECO:0000255" key="1">
    <source>
        <dbReference type="HAMAP-Rule" id="MF_01297"/>
    </source>
</evidence>
<organism>
    <name type="scientific">Mycobacterium sp. (strain MCS)</name>
    <dbReference type="NCBI Taxonomy" id="164756"/>
    <lineage>
        <taxon>Bacteria</taxon>
        <taxon>Bacillati</taxon>
        <taxon>Actinomycetota</taxon>
        <taxon>Actinomycetes</taxon>
        <taxon>Mycobacteriales</taxon>
        <taxon>Mycobacteriaceae</taxon>
        <taxon>Mycobacterium</taxon>
    </lineage>
</organism>
<dbReference type="EC" id="5.99.-.-" evidence="1"/>
<dbReference type="EMBL" id="CP000384">
    <property type="protein sequence ID" value="ABG06542.1"/>
    <property type="molecule type" value="Genomic_DNA"/>
</dbReference>
<dbReference type="SMR" id="Q1BEZ2"/>
<dbReference type="KEGG" id="mmc:Mmcs_0421"/>
<dbReference type="HOGENOM" id="CLU_085483_0_0_11"/>
<dbReference type="BioCyc" id="MSP164756:G1G6O-429-MONOMER"/>
<dbReference type="GO" id="GO:0020037">
    <property type="term" value="F:heme binding"/>
    <property type="evidence" value="ECO:0007669"/>
    <property type="project" value="UniProtKB-UniRule"/>
</dbReference>
<dbReference type="GO" id="GO:0046872">
    <property type="term" value="F:metal ion binding"/>
    <property type="evidence" value="ECO:0007669"/>
    <property type="project" value="UniProtKB-KW"/>
</dbReference>
<dbReference type="GO" id="GO:0062213">
    <property type="term" value="F:peroxynitrite isomerase activity"/>
    <property type="evidence" value="ECO:0007669"/>
    <property type="project" value="UniProtKB-UniRule"/>
</dbReference>
<dbReference type="CDD" id="cd07828">
    <property type="entry name" value="lipocalin_heme-bd-THAP4-like"/>
    <property type="match status" value="1"/>
</dbReference>
<dbReference type="Gene3D" id="2.40.128.20">
    <property type="match status" value="1"/>
</dbReference>
<dbReference type="HAMAP" id="MF_01297">
    <property type="entry name" value="nitrobindin"/>
    <property type="match status" value="1"/>
</dbReference>
<dbReference type="InterPro" id="IPR012674">
    <property type="entry name" value="Calycin"/>
</dbReference>
<dbReference type="InterPro" id="IPR022939">
    <property type="entry name" value="Nb(III)_bact/plant"/>
</dbReference>
<dbReference type="InterPro" id="IPR045165">
    <property type="entry name" value="Nitrobindin"/>
</dbReference>
<dbReference type="InterPro" id="IPR054873">
    <property type="entry name" value="PeroxynitIsom"/>
</dbReference>
<dbReference type="InterPro" id="IPR014878">
    <property type="entry name" value="THAP4-like_heme-bd"/>
</dbReference>
<dbReference type="NCBIfam" id="NF045819">
    <property type="entry name" value="PeroxynitIsom"/>
    <property type="match status" value="1"/>
</dbReference>
<dbReference type="PANTHER" id="PTHR15854:SF4">
    <property type="entry name" value="PEROXYNITRITE ISOMERASE THAP4"/>
    <property type="match status" value="1"/>
</dbReference>
<dbReference type="PANTHER" id="PTHR15854">
    <property type="entry name" value="THAP4 PROTEIN"/>
    <property type="match status" value="1"/>
</dbReference>
<dbReference type="Pfam" id="PF08768">
    <property type="entry name" value="THAP4_heme-bd"/>
    <property type="match status" value="1"/>
</dbReference>
<dbReference type="SUPFAM" id="SSF50814">
    <property type="entry name" value="Lipocalins"/>
    <property type="match status" value="1"/>
</dbReference>
<comment type="function">
    <text evidence="1">Heme-binding protein able to scavenge peroxynitrite and to protect free L-tyrosine against peroxynitrite-mediated nitration, by acting as a peroxynitrite isomerase that converts peroxynitrite to nitrate. Therefore, this protein likely plays a role in peroxynitrite sensing and in the detoxification of reactive nitrogen and oxygen species (RNS and ROS, respectively). Is able to bind nitric oxide (NO) in vitro, but may act as a sensor of peroxynitrite levels in vivo.</text>
</comment>
<comment type="catalytic activity">
    <reaction evidence="1">
        <text>peroxynitrite = nitrate</text>
        <dbReference type="Rhea" id="RHEA:63116"/>
        <dbReference type="ChEBI" id="CHEBI:17632"/>
        <dbReference type="ChEBI" id="CHEBI:25941"/>
    </reaction>
    <physiologicalReaction direction="left-to-right" evidence="1">
        <dbReference type="Rhea" id="RHEA:63117"/>
    </physiologicalReaction>
</comment>
<comment type="cofactor">
    <cofactor evidence="1">
        <name>heme b</name>
        <dbReference type="ChEBI" id="CHEBI:60344"/>
    </cofactor>
    <text evidence="1">Binds 1 heme b group per subunit, that coordinates a highly solvent-exposed Fe(III) atom.</text>
</comment>
<comment type="pathway">
    <text evidence="1">Nitrogen metabolism.</text>
</comment>
<comment type="subunit">
    <text evidence="1">Homodimer.</text>
</comment>
<comment type="domain">
    <text evidence="1">Forms a 10-stranded antiparallel beta-barrel structure able to accommodate a hydrophobic ligand in its interior. In fact, this fold hosts the heme group, which is located in a wide surface cleft.</text>
</comment>
<comment type="similarity">
    <text evidence="1">Belongs to the nitrobindin family.</text>
</comment>
<name>NB2_MYCSS</name>
<protein>
    <recommendedName>
        <fullName>Peroxynitrite isomerase 2</fullName>
        <ecNumber evidence="1">5.99.-.-</ecNumber>
    </recommendedName>
    <alternativeName>
        <fullName>Ferric nitrobindin</fullName>
        <shortName>Nb(III)</shortName>
    </alternativeName>
</protein>
<reference key="1">
    <citation type="submission" date="2006-06" db="EMBL/GenBank/DDBJ databases">
        <title>Complete sequence of chromosome of Mycobacterium sp. MCS.</title>
        <authorList>
            <consortium name="US DOE Joint Genome Institute"/>
            <person name="Copeland A."/>
            <person name="Lucas S."/>
            <person name="Lapidus A."/>
            <person name="Barry K."/>
            <person name="Detter J.C."/>
            <person name="Glavina del Rio T."/>
            <person name="Hammon N."/>
            <person name="Israni S."/>
            <person name="Dalin E."/>
            <person name="Tice H."/>
            <person name="Pitluck S."/>
            <person name="Martinez M."/>
            <person name="Schmutz J."/>
            <person name="Larimer F."/>
            <person name="Land M."/>
            <person name="Hauser L."/>
            <person name="Kyrpides N."/>
            <person name="Kim E."/>
            <person name="Miller C.D."/>
            <person name="Hughes J.E."/>
            <person name="Anderson A.J."/>
            <person name="Sims R.C."/>
            <person name="Richardson P."/>
        </authorList>
    </citation>
    <scope>NUCLEOTIDE SEQUENCE [LARGE SCALE GENOMIC DNA]</scope>
    <source>
        <strain>MCS</strain>
    </source>
</reference>
<sequence length="175" mass="18997">MNARSTYPGDVAVTIPEVHPDLTALAPLLGTWSGKGSGEYPTIEPFDYTEEITFGHTGKPFLTYVQRTRAADDGRPLHAETGYLRAPTPNNVEWILAHPTGITEIQEGPLTADGDTLRMDLISTDIGRSESAKEVMAVGRSMQISGDTLTYTLRMAAVGRPLQHHLSAVLHRVSS</sequence>
<gene>
    <name type="ordered locus">Mmcs_0421</name>
</gene>
<feature type="chain" id="PRO_0000356932" description="Peroxynitrite isomerase 2">
    <location>
        <begin position="1"/>
        <end position="175"/>
    </location>
</feature>
<feature type="short sequence motif" description="GXWXGXG" evidence="1">
    <location>
        <begin position="30"/>
        <end position="36"/>
    </location>
</feature>
<feature type="binding site" description="axial binding residue" evidence="1">
    <location>
        <position position="165"/>
    </location>
    <ligand>
        <name>heme b</name>
        <dbReference type="ChEBI" id="CHEBI:60344"/>
    </ligand>
    <ligandPart>
        <name>Fe</name>
        <dbReference type="ChEBI" id="CHEBI:18248"/>
    </ligandPart>
</feature>
<keyword id="KW-0349">Heme</keyword>
<keyword id="KW-0408">Iron</keyword>
<keyword id="KW-0413">Isomerase</keyword>
<keyword id="KW-0479">Metal-binding</keyword>
<proteinExistence type="inferred from homology"/>